<protein>
    <recommendedName>
        <fullName>SPbeta prophage-derived uncharacterized protein YomW</fullName>
    </recommendedName>
</protein>
<gene>
    <name type="primary">yomW</name>
    <name type="ordered locus">BSU21200</name>
</gene>
<accession>O31961</accession>
<sequence length="168" mass="19333">MSMTVEQMTKVFRLVMDDVELNRLLYYKTDPLSPSHPDVQSLENYYDSTNDSPAIINTIFKRAPKTDDLSDSPLCRMCIYLGNALPKPTNQSFMLLNQELMIDVYTHINTFEISEYRSLKIIDRVSKLFFNKNIAGFGVTVDYKRLLISNPPDGYLGYKMIFTFGASK</sequence>
<dbReference type="EMBL" id="AL009126">
    <property type="protein sequence ID" value="CAB14038.1"/>
    <property type="molecule type" value="Genomic_DNA"/>
</dbReference>
<dbReference type="RefSeq" id="NP_390003.1">
    <property type="nucleotide sequence ID" value="NC_000964.3"/>
</dbReference>
<dbReference type="RefSeq" id="WP_004399477.1">
    <property type="nucleotide sequence ID" value="NZ_OZ025638.1"/>
</dbReference>
<dbReference type="FunCoup" id="O31961">
    <property type="interactions" value="45"/>
</dbReference>
<dbReference type="STRING" id="224308.BSU21200"/>
<dbReference type="PaxDb" id="224308-BSU21200"/>
<dbReference type="EnsemblBacteria" id="CAB14038">
    <property type="protein sequence ID" value="CAB14038"/>
    <property type="gene ID" value="BSU_21200"/>
</dbReference>
<dbReference type="GeneID" id="939150"/>
<dbReference type="KEGG" id="bsu:BSU21200"/>
<dbReference type="PATRIC" id="fig|224308.179.peg.2314"/>
<dbReference type="eggNOG" id="ENOG5030EVN">
    <property type="taxonomic scope" value="Bacteria"/>
</dbReference>
<dbReference type="InParanoid" id="O31961"/>
<dbReference type="OrthoDB" id="2733002at2"/>
<dbReference type="BioCyc" id="BSUB:BSU21200-MONOMER"/>
<dbReference type="Proteomes" id="UP000001570">
    <property type="component" value="Chromosome"/>
</dbReference>
<reference key="1">
    <citation type="journal article" date="1997" name="Nature">
        <title>The complete genome sequence of the Gram-positive bacterium Bacillus subtilis.</title>
        <authorList>
            <person name="Kunst F."/>
            <person name="Ogasawara N."/>
            <person name="Moszer I."/>
            <person name="Albertini A.M."/>
            <person name="Alloni G."/>
            <person name="Azevedo V."/>
            <person name="Bertero M.G."/>
            <person name="Bessieres P."/>
            <person name="Bolotin A."/>
            <person name="Borchert S."/>
            <person name="Borriss R."/>
            <person name="Boursier L."/>
            <person name="Brans A."/>
            <person name="Braun M."/>
            <person name="Brignell S.C."/>
            <person name="Bron S."/>
            <person name="Brouillet S."/>
            <person name="Bruschi C.V."/>
            <person name="Caldwell B."/>
            <person name="Capuano V."/>
            <person name="Carter N.M."/>
            <person name="Choi S.-K."/>
            <person name="Codani J.-J."/>
            <person name="Connerton I.F."/>
            <person name="Cummings N.J."/>
            <person name="Daniel R.A."/>
            <person name="Denizot F."/>
            <person name="Devine K.M."/>
            <person name="Duesterhoeft A."/>
            <person name="Ehrlich S.D."/>
            <person name="Emmerson P.T."/>
            <person name="Entian K.-D."/>
            <person name="Errington J."/>
            <person name="Fabret C."/>
            <person name="Ferrari E."/>
            <person name="Foulger D."/>
            <person name="Fritz C."/>
            <person name="Fujita M."/>
            <person name="Fujita Y."/>
            <person name="Fuma S."/>
            <person name="Galizzi A."/>
            <person name="Galleron N."/>
            <person name="Ghim S.-Y."/>
            <person name="Glaser P."/>
            <person name="Goffeau A."/>
            <person name="Golightly E.J."/>
            <person name="Grandi G."/>
            <person name="Guiseppi G."/>
            <person name="Guy B.J."/>
            <person name="Haga K."/>
            <person name="Haiech J."/>
            <person name="Harwood C.R."/>
            <person name="Henaut A."/>
            <person name="Hilbert H."/>
            <person name="Holsappel S."/>
            <person name="Hosono S."/>
            <person name="Hullo M.-F."/>
            <person name="Itaya M."/>
            <person name="Jones L.-M."/>
            <person name="Joris B."/>
            <person name="Karamata D."/>
            <person name="Kasahara Y."/>
            <person name="Klaerr-Blanchard M."/>
            <person name="Klein C."/>
            <person name="Kobayashi Y."/>
            <person name="Koetter P."/>
            <person name="Koningstein G."/>
            <person name="Krogh S."/>
            <person name="Kumano M."/>
            <person name="Kurita K."/>
            <person name="Lapidus A."/>
            <person name="Lardinois S."/>
            <person name="Lauber J."/>
            <person name="Lazarevic V."/>
            <person name="Lee S.-M."/>
            <person name="Levine A."/>
            <person name="Liu H."/>
            <person name="Masuda S."/>
            <person name="Mauel C."/>
            <person name="Medigue C."/>
            <person name="Medina N."/>
            <person name="Mellado R.P."/>
            <person name="Mizuno M."/>
            <person name="Moestl D."/>
            <person name="Nakai S."/>
            <person name="Noback M."/>
            <person name="Noone D."/>
            <person name="O'Reilly M."/>
            <person name="Ogawa K."/>
            <person name="Ogiwara A."/>
            <person name="Oudega B."/>
            <person name="Park S.-H."/>
            <person name="Parro V."/>
            <person name="Pohl T.M."/>
            <person name="Portetelle D."/>
            <person name="Porwollik S."/>
            <person name="Prescott A.M."/>
            <person name="Presecan E."/>
            <person name="Pujic P."/>
            <person name="Purnelle B."/>
            <person name="Rapoport G."/>
            <person name="Rey M."/>
            <person name="Reynolds S."/>
            <person name="Rieger M."/>
            <person name="Rivolta C."/>
            <person name="Rocha E."/>
            <person name="Roche B."/>
            <person name="Rose M."/>
            <person name="Sadaie Y."/>
            <person name="Sato T."/>
            <person name="Scanlan E."/>
            <person name="Schleich S."/>
            <person name="Schroeter R."/>
            <person name="Scoffone F."/>
            <person name="Sekiguchi J."/>
            <person name="Sekowska A."/>
            <person name="Seror S.J."/>
            <person name="Serror P."/>
            <person name="Shin B.-S."/>
            <person name="Soldo B."/>
            <person name="Sorokin A."/>
            <person name="Tacconi E."/>
            <person name="Takagi T."/>
            <person name="Takahashi H."/>
            <person name="Takemaru K."/>
            <person name="Takeuchi M."/>
            <person name="Tamakoshi A."/>
            <person name="Tanaka T."/>
            <person name="Terpstra P."/>
            <person name="Tognoni A."/>
            <person name="Tosato V."/>
            <person name="Uchiyama S."/>
            <person name="Vandenbol M."/>
            <person name="Vannier F."/>
            <person name="Vassarotti A."/>
            <person name="Viari A."/>
            <person name="Wambutt R."/>
            <person name="Wedler E."/>
            <person name="Wedler H."/>
            <person name="Weitzenegger T."/>
            <person name="Winters P."/>
            <person name="Wipat A."/>
            <person name="Yamamoto H."/>
            <person name="Yamane K."/>
            <person name="Yasumoto K."/>
            <person name="Yata K."/>
            <person name="Yoshida K."/>
            <person name="Yoshikawa H.-F."/>
            <person name="Zumstein E."/>
            <person name="Yoshikawa H."/>
            <person name="Danchin A."/>
        </authorList>
    </citation>
    <scope>NUCLEOTIDE SEQUENCE [LARGE SCALE GENOMIC DNA]</scope>
    <source>
        <strain>168</strain>
    </source>
</reference>
<keyword id="KW-1185">Reference proteome</keyword>
<organism>
    <name type="scientific">Bacillus subtilis (strain 168)</name>
    <dbReference type="NCBI Taxonomy" id="224308"/>
    <lineage>
        <taxon>Bacteria</taxon>
        <taxon>Bacillati</taxon>
        <taxon>Bacillota</taxon>
        <taxon>Bacilli</taxon>
        <taxon>Bacillales</taxon>
        <taxon>Bacillaceae</taxon>
        <taxon>Bacillus</taxon>
    </lineage>
</organism>
<name>YOMW_BACSU</name>
<proteinExistence type="predicted"/>
<feature type="chain" id="PRO_0000360056" description="SPbeta prophage-derived uncharacterized protein YomW">
    <location>
        <begin position="1"/>
        <end position="168"/>
    </location>
</feature>